<keyword id="KW-0028">Amino-acid biosynthesis</keyword>
<keyword id="KW-0100">Branched-chain amino acid biosynthesis</keyword>
<keyword id="KW-0432">Leucine biosynthesis</keyword>
<keyword id="KW-0456">Lyase</keyword>
<keyword id="KW-0614">Plasmid</keyword>
<keyword id="KW-1185">Reference proteome</keyword>
<protein>
    <recommendedName>
        <fullName>3-isopropylmalate dehydratase small subunit</fullName>
        <ecNumber>4.2.1.33</ecNumber>
    </recommendedName>
    <alternativeName>
        <fullName>Alpha-IPM isomerase</fullName>
        <shortName>IPMI</shortName>
    </alternativeName>
    <alternativeName>
        <fullName>Isopropylmalate isomerase</fullName>
    </alternativeName>
</protein>
<proteinExistence type="inferred from homology"/>
<accession>P56935</accession>
<accession>Q9KGP7</accession>
<accession>Q9R6R2</accession>
<feature type="chain" id="PRO_0000141797" description="3-isopropylmalate dehydratase small subunit">
    <location>
        <begin position="1"/>
        <end position="207"/>
    </location>
</feature>
<name>LEUD_BUCAI</name>
<sequence>MFKFTGHAGIVVPLDISNIDTDIIIPKQFLKRVNKIGFGKYLFHDWRFIDANQLVKNEDFILNKKIYKNASILLTRENFGCGSSREHAVWSLVDYGFKVIIAPSFADIFYNNSFNNKLLLITLSSSEITFLFDIVKNNIGITFDVSLVEKTVTVNKEVFSFELDDFHYFCLLNDLDNIDLTMKHLSEIKSYESRISDFLLERRDFQS</sequence>
<dbReference type="EC" id="4.2.1.33"/>
<dbReference type="EMBL" id="AJ006878">
    <property type="protein sequence ID" value="CAB56193.1"/>
    <property type="molecule type" value="Genomic_DNA"/>
</dbReference>
<dbReference type="EMBL" id="AP001071">
    <property type="protein sequence ID" value="BAA95426.1"/>
    <property type="molecule type" value="Genomic_DNA"/>
</dbReference>
<dbReference type="RefSeq" id="NP_057971.1">
    <property type="nucleotide sequence ID" value="NC_002253.1"/>
</dbReference>
<dbReference type="RefSeq" id="WP_010892297.1">
    <property type="nucleotide sequence ID" value="NC_002253.1"/>
</dbReference>
<dbReference type="SMR" id="P56935"/>
<dbReference type="EnsemblBacteria" id="BAA95426">
    <property type="protein sequence ID" value="BAA95426"/>
    <property type="gene ID" value="BAA95426"/>
</dbReference>
<dbReference type="KEGG" id="buc:BUpL07"/>
<dbReference type="PATRIC" id="fig|107806.10.peg.13"/>
<dbReference type="HOGENOM" id="CLU_081378_0_3_6"/>
<dbReference type="UniPathway" id="UPA00048">
    <property type="reaction ID" value="UER00071"/>
</dbReference>
<dbReference type="Proteomes" id="UP000001806">
    <property type="component" value="Plasmid pLeu"/>
</dbReference>
<dbReference type="GO" id="GO:0009316">
    <property type="term" value="C:3-isopropylmalate dehydratase complex"/>
    <property type="evidence" value="ECO:0007669"/>
    <property type="project" value="InterPro"/>
</dbReference>
<dbReference type="GO" id="GO:0003861">
    <property type="term" value="F:3-isopropylmalate dehydratase activity"/>
    <property type="evidence" value="ECO:0007669"/>
    <property type="project" value="UniProtKB-UniRule"/>
</dbReference>
<dbReference type="GO" id="GO:0009098">
    <property type="term" value="P:L-leucine biosynthetic process"/>
    <property type="evidence" value="ECO:0007669"/>
    <property type="project" value="UniProtKB-UniRule"/>
</dbReference>
<dbReference type="CDD" id="cd01577">
    <property type="entry name" value="IPMI_Swivel"/>
    <property type="match status" value="1"/>
</dbReference>
<dbReference type="FunFam" id="3.20.19.10:FF:000003">
    <property type="entry name" value="3-isopropylmalate dehydratase small subunit"/>
    <property type="match status" value="1"/>
</dbReference>
<dbReference type="Gene3D" id="3.20.19.10">
    <property type="entry name" value="Aconitase, domain 4"/>
    <property type="match status" value="1"/>
</dbReference>
<dbReference type="HAMAP" id="MF_01031">
    <property type="entry name" value="LeuD_type1"/>
    <property type="match status" value="1"/>
</dbReference>
<dbReference type="InterPro" id="IPR004431">
    <property type="entry name" value="3-IsopropMal_deHydase_ssu"/>
</dbReference>
<dbReference type="InterPro" id="IPR015928">
    <property type="entry name" value="Aconitase/3IPM_dehydase_swvl"/>
</dbReference>
<dbReference type="InterPro" id="IPR000573">
    <property type="entry name" value="AconitaseA/IPMdHydase_ssu_swvl"/>
</dbReference>
<dbReference type="InterPro" id="IPR033940">
    <property type="entry name" value="IPMI_Swivel"/>
</dbReference>
<dbReference type="InterPro" id="IPR050075">
    <property type="entry name" value="LeuD"/>
</dbReference>
<dbReference type="NCBIfam" id="TIGR00171">
    <property type="entry name" value="leuD"/>
    <property type="match status" value="1"/>
</dbReference>
<dbReference type="NCBIfam" id="NF002458">
    <property type="entry name" value="PRK01641.1"/>
    <property type="match status" value="1"/>
</dbReference>
<dbReference type="PANTHER" id="PTHR43345:SF5">
    <property type="entry name" value="3-ISOPROPYLMALATE DEHYDRATASE SMALL SUBUNIT"/>
    <property type="match status" value="1"/>
</dbReference>
<dbReference type="PANTHER" id="PTHR43345">
    <property type="entry name" value="3-ISOPROPYLMALATE DEHYDRATASE SMALL SUBUNIT 2-RELATED-RELATED"/>
    <property type="match status" value="1"/>
</dbReference>
<dbReference type="Pfam" id="PF00694">
    <property type="entry name" value="Aconitase_C"/>
    <property type="match status" value="1"/>
</dbReference>
<dbReference type="SUPFAM" id="SSF52016">
    <property type="entry name" value="LeuD/IlvD-like"/>
    <property type="match status" value="1"/>
</dbReference>
<organism>
    <name type="scientific">Buchnera aphidicola subsp. Acyrthosiphon pisum (strain APS)</name>
    <name type="common">Acyrthosiphon pisum symbiotic bacterium</name>
    <dbReference type="NCBI Taxonomy" id="107806"/>
    <lineage>
        <taxon>Bacteria</taxon>
        <taxon>Pseudomonadati</taxon>
        <taxon>Pseudomonadota</taxon>
        <taxon>Gammaproteobacteria</taxon>
        <taxon>Enterobacterales</taxon>
        <taxon>Erwiniaceae</taxon>
        <taxon>Buchnera</taxon>
    </lineage>
</organism>
<evidence type="ECO:0000250" key="1"/>
<evidence type="ECO:0000305" key="2"/>
<geneLocation type="plasmid">
    <name>pLeu</name>
    <name>pBAp1</name>
</geneLocation>
<comment type="function">
    <text evidence="1">Catalyzes the isomerization between 2-isopropylmalate and 3-isopropylmalate, via the formation of 2-isopropylmaleate.</text>
</comment>
<comment type="catalytic activity">
    <reaction>
        <text>(2R,3S)-3-isopropylmalate = (2S)-2-isopropylmalate</text>
        <dbReference type="Rhea" id="RHEA:32287"/>
        <dbReference type="ChEBI" id="CHEBI:1178"/>
        <dbReference type="ChEBI" id="CHEBI:35121"/>
        <dbReference type="EC" id="4.2.1.33"/>
    </reaction>
</comment>
<comment type="pathway">
    <text>Amino-acid biosynthesis; L-leucine biosynthesis; L-leucine from 3-methyl-2-oxobutanoate: step 2/4.</text>
</comment>
<comment type="subunit">
    <text>Heterodimer of LeuC and LeuD.</text>
</comment>
<comment type="similarity">
    <text evidence="2">Belongs to the LeuD family. LeuD type 1 subfamily.</text>
</comment>
<gene>
    <name type="primary">leuD</name>
    <name type="ordered locus">BUpL07</name>
</gene>
<reference key="1">
    <citation type="journal article" date="2000" name="Curr. Microbiol.">
        <title>Molecular characterization of the Leucine plasmid from Buchnera aphidicola, primary endosymbiont of the aphid Acyrthosiphon pisum.</title>
        <authorList>
            <person name="Soler T."/>
            <person name="Latorre A."/>
            <person name="Sabater B."/>
            <person name="Silva F.J."/>
        </authorList>
    </citation>
    <scope>NUCLEOTIDE SEQUENCE [GENOMIC DNA]</scope>
</reference>
<reference key="2">
    <citation type="journal article" date="2000" name="Nature">
        <title>Genome sequence of the endocellular bacterial symbiont of aphids Buchnera sp. APS.</title>
        <authorList>
            <person name="Shigenobu S."/>
            <person name="Watanabe H."/>
            <person name="Hattori M."/>
            <person name="Sakaki Y."/>
            <person name="Ishikawa H."/>
        </authorList>
    </citation>
    <scope>NUCLEOTIDE SEQUENCE [LARGE SCALE GENOMIC DNA]</scope>
    <source>
        <strain>APS</strain>
    </source>
</reference>